<reference key="1">
    <citation type="journal article" date="2008" name="DNA Res.">
        <title>Comparative genome analysis of Lactobacillus reuteri and Lactobacillus fermentum reveal a genomic island for reuterin and cobalamin production.</title>
        <authorList>
            <person name="Morita H."/>
            <person name="Toh H."/>
            <person name="Fukuda S."/>
            <person name="Horikawa H."/>
            <person name="Oshima K."/>
            <person name="Suzuki T."/>
            <person name="Murakami M."/>
            <person name="Hisamatsu S."/>
            <person name="Kato Y."/>
            <person name="Takizawa T."/>
            <person name="Fukuoka H."/>
            <person name="Yoshimura T."/>
            <person name="Itoh K."/>
            <person name="O'Sullivan D.J."/>
            <person name="McKay L.L."/>
            <person name="Ohno H."/>
            <person name="Kikuchi J."/>
            <person name="Masaoka T."/>
            <person name="Hattori M."/>
        </authorList>
    </citation>
    <scope>NUCLEOTIDE SEQUENCE [LARGE SCALE GENOMIC DNA]</scope>
    <source>
        <strain>NBRC 3956 / LMG 18251</strain>
    </source>
</reference>
<protein>
    <recommendedName>
        <fullName evidence="1">Arginine--tRNA ligase</fullName>
        <ecNumber evidence="1">6.1.1.19</ecNumber>
    </recommendedName>
    <alternativeName>
        <fullName evidence="1">Arginyl-tRNA synthetase</fullName>
        <shortName evidence="1">ArgRS</shortName>
    </alternativeName>
</protein>
<comment type="catalytic activity">
    <reaction evidence="1">
        <text>tRNA(Arg) + L-arginine + ATP = L-arginyl-tRNA(Arg) + AMP + diphosphate</text>
        <dbReference type="Rhea" id="RHEA:20301"/>
        <dbReference type="Rhea" id="RHEA-COMP:9658"/>
        <dbReference type="Rhea" id="RHEA-COMP:9673"/>
        <dbReference type="ChEBI" id="CHEBI:30616"/>
        <dbReference type="ChEBI" id="CHEBI:32682"/>
        <dbReference type="ChEBI" id="CHEBI:33019"/>
        <dbReference type="ChEBI" id="CHEBI:78442"/>
        <dbReference type="ChEBI" id="CHEBI:78513"/>
        <dbReference type="ChEBI" id="CHEBI:456215"/>
        <dbReference type="EC" id="6.1.1.19"/>
    </reaction>
</comment>
<comment type="subunit">
    <text evidence="1">Monomer.</text>
</comment>
<comment type="subcellular location">
    <subcellularLocation>
        <location evidence="1">Cytoplasm</location>
    </subcellularLocation>
</comment>
<comment type="similarity">
    <text evidence="1">Belongs to the class-I aminoacyl-tRNA synthetase family.</text>
</comment>
<sequence length="562" mass="63150">MNERQQVASALQKVLPNLSVEDLEAKLERPKDAKNGDYAFPTFFLAKELHRAPQVIASELAEQIDQSGFERVVVAGPYINFFLDKASVGGEILAAVLADPANYGSTDLGHQGHVTIDLSSPNIAKPMGMGHLRSTVIGNAIANILAKVNYVPVRINHLGDWGTQFGKLMAAYEMWGDEAEVQKDPINTLQKYYVKINTEADEHPEYDDLGREWFAKLEQGDPEAQRLWKWFREVSLQRFMKIYNLLDIDFDSFNGEAFYNDKMDEVVTLLEDKQLLKESRGAEIIDLEKYDLNPAMIRKSDGSTLYLTRDLAAALFRKRMYHHAQSLYVVGAEQSNHFAQLKAVLSEMGFTWSDQIHHIPFGLMSLNGKKMSTRKGNIIQLEDVLNDSIKLARQQIEEKNPTLANADQVAEEVGVGAVIFHDLKNERTNSVDFKLEEVVKFEGETGPYVQYAHARAESILRKAGRPSFEGATLTVDGQEAWEVAKKIGQYQETIVRAANEYDPSLIGKYALSLAKSFNQYYAHTRILEEDDQKLSRLALVQAVSDVLKSALALLGVKAPDEM</sequence>
<proteinExistence type="inferred from homology"/>
<gene>
    <name evidence="1" type="primary">argS</name>
    <name type="ordered locus">LAF_1333</name>
</gene>
<keyword id="KW-0030">Aminoacyl-tRNA synthetase</keyword>
<keyword id="KW-0067">ATP-binding</keyword>
<keyword id="KW-0963">Cytoplasm</keyword>
<keyword id="KW-0436">Ligase</keyword>
<keyword id="KW-0547">Nucleotide-binding</keyword>
<keyword id="KW-0648">Protein biosynthesis</keyword>
<keyword id="KW-1185">Reference proteome</keyword>
<organism>
    <name type="scientific">Limosilactobacillus fermentum (strain NBRC 3956 / LMG 18251)</name>
    <name type="common">Lactobacillus fermentum</name>
    <dbReference type="NCBI Taxonomy" id="334390"/>
    <lineage>
        <taxon>Bacteria</taxon>
        <taxon>Bacillati</taxon>
        <taxon>Bacillota</taxon>
        <taxon>Bacilli</taxon>
        <taxon>Lactobacillales</taxon>
        <taxon>Lactobacillaceae</taxon>
        <taxon>Limosilactobacillus</taxon>
    </lineage>
</organism>
<dbReference type="EC" id="6.1.1.19" evidence="1"/>
<dbReference type="EMBL" id="AP008937">
    <property type="protein sequence ID" value="BAG27669.1"/>
    <property type="molecule type" value="Genomic_DNA"/>
</dbReference>
<dbReference type="RefSeq" id="WP_012391485.1">
    <property type="nucleotide sequence ID" value="NC_010610.1"/>
</dbReference>
<dbReference type="SMR" id="B2GDD7"/>
<dbReference type="KEGG" id="lfe:LAF_1333"/>
<dbReference type="eggNOG" id="COG0018">
    <property type="taxonomic scope" value="Bacteria"/>
</dbReference>
<dbReference type="HOGENOM" id="CLU_006406_6_1_9"/>
<dbReference type="Proteomes" id="UP000001697">
    <property type="component" value="Chromosome"/>
</dbReference>
<dbReference type="GO" id="GO:0005737">
    <property type="term" value="C:cytoplasm"/>
    <property type="evidence" value="ECO:0007669"/>
    <property type="project" value="UniProtKB-SubCell"/>
</dbReference>
<dbReference type="GO" id="GO:0004814">
    <property type="term" value="F:arginine-tRNA ligase activity"/>
    <property type="evidence" value="ECO:0007669"/>
    <property type="project" value="UniProtKB-UniRule"/>
</dbReference>
<dbReference type="GO" id="GO:0005524">
    <property type="term" value="F:ATP binding"/>
    <property type="evidence" value="ECO:0007669"/>
    <property type="project" value="UniProtKB-UniRule"/>
</dbReference>
<dbReference type="GO" id="GO:0006420">
    <property type="term" value="P:arginyl-tRNA aminoacylation"/>
    <property type="evidence" value="ECO:0007669"/>
    <property type="project" value="UniProtKB-UniRule"/>
</dbReference>
<dbReference type="CDD" id="cd07956">
    <property type="entry name" value="Anticodon_Ia_Arg"/>
    <property type="match status" value="1"/>
</dbReference>
<dbReference type="CDD" id="cd00671">
    <property type="entry name" value="ArgRS_core"/>
    <property type="match status" value="1"/>
</dbReference>
<dbReference type="FunFam" id="3.40.50.620:FF:000116">
    <property type="entry name" value="Arginine--tRNA ligase"/>
    <property type="match status" value="1"/>
</dbReference>
<dbReference type="Gene3D" id="3.30.1360.70">
    <property type="entry name" value="Arginyl tRNA synthetase N-terminal domain"/>
    <property type="match status" value="1"/>
</dbReference>
<dbReference type="Gene3D" id="3.40.50.620">
    <property type="entry name" value="HUPs"/>
    <property type="match status" value="1"/>
</dbReference>
<dbReference type="Gene3D" id="1.10.730.10">
    <property type="entry name" value="Isoleucyl-tRNA Synthetase, Domain 1"/>
    <property type="match status" value="1"/>
</dbReference>
<dbReference type="HAMAP" id="MF_00123">
    <property type="entry name" value="Arg_tRNA_synth"/>
    <property type="match status" value="1"/>
</dbReference>
<dbReference type="InterPro" id="IPR001278">
    <property type="entry name" value="Arg-tRNA-ligase"/>
</dbReference>
<dbReference type="InterPro" id="IPR005148">
    <property type="entry name" value="Arg-tRNA-synth_N"/>
</dbReference>
<dbReference type="InterPro" id="IPR036695">
    <property type="entry name" value="Arg-tRNA-synth_N_sf"/>
</dbReference>
<dbReference type="InterPro" id="IPR035684">
    <property type="entry name" value="ArgRS_core"/>
</dbReference>
<dbReference type="InterPro" id="IPR008909">
    <property type="entry name" value="DALR_anticod-bd"/>
</dbReference>
<dbReference type="InterPro" id="IPR014729">
    <property type="entry name" value="Rossmann-like_a/b/a_fold"/>
</dbReference>
<dbReference type="InterPro" id="IPR009080">
    <property type="entry name" value="tRNAsynth_Ia_anticodon-bd"/>
</dbReference>
<dbReference type="NCBIfam" id="TIGR00456">
    <property type="entry name" value="argS"/>
    <property type="match status" value="1"/>
</dbReference>
<dbReference type="PANTHER" id="PTHR11956:SF5">
    <property type="entry name" value="ARGININE--TRNA LIGASE, CYTOPLASMIC"/>
    <property type="match status" value="1"/>
</dbReference>
<dbReference type="PANTHER" id="PTHR11956">
    <property type="entry name" value="ARGINYL-TRNA SYNTHETASE"/>
    <property type="match status" value="1"/>
</dbReference>
<dbReference type="Pfam" id="PF03485">
    <property type="entry name" value="Arg_tRNA_synt_N"/>
    <property type="match status" value="1"/>
</dbReference>
<dbReference type="Pfam" id="PF05746">
    <property type="entry name" value="DALR_1"/>
    <property type="match status" value="1"/>
</dbReference>
<dbReference type="Pfam" id="PF00750">
    <property type="entry name" value="tRNA-synt_1d"/>
    <property type="match status" value="1"/>
</dbReference>
<dbReference type="PRINTS" id="PR01038">
    <property type="entry name" value="TRNASYNTHARG"/>
</dbReference>
<dbReference type="SMART" id="SM01016">
    <property type="entry name" value="Arg_tRNA_synt_N"/>
    <property type="match status" value="1"/>
</dbReference>
<dbReference type="SMART" id="SM00836">
    <property type="entry name" value="DALR_1"/>
    <property type="match status" value="1"/>
</dbReference>
<dbReference type="SUPFAM" id="SSF47323">
    <property type="entry name" value="Anticodon-binding domain of a subclass of class I aminoacyl-tRNA synthetases"/>
    <property type="match status" value="1"/>
</dbReference>
<dbReference type="SUPFAM" id="SSF55190">
    <property type="entry name" value="Arginyl-tRNA synthetase (ArgRS), N-terminal 'additional' domain"/>
    <property type="match status" value="1"/>
</dbReference>
<dbReference type="SUPFAM" id="SSF52374">
    <property type="entry name" value="Nucleotidylyl transferase"/>
    <property type="match status" value="1"/>
</dbReference>
<accession>B2GDD7</accession>
<evidence type="ECO:0000255" key="1">
    <source>
        <dbReference type="HAMAP-Rule" id="MF_00123"/>
    </source>
</evidence>
<feature type="chain" id="PRO_1000095375" description="Arginine--tRNA ligase">
    <location>
        <begin position="1"/>
        <end position="562"/>
    </location>
</feature>
<feature type="short sequence motif" description="'HIGH' region">
    <location>
        <begin position="121"/>
        <end position="131"/>
    </location>
</feature>
<name>SYR_LIMF3</name>